<protein>
    <recommendedName>
        <fullName>Metallothionein-2</fullName>
        <shortName>MT-2</shortName>
    </recommendedName>
    <alternativeName>
        <fullName>Metallothionein-II</fullName>
        <shortName>MT-II</shortName>
    </alternativeName>
</protein>
<proteinExistence type="evidence at protein level"/>
<dbReference type="EMBL" id="AB028042">
    <property type="protein sequence ID" value="BAA87327.1"/>
    <property type="molecule type" value="mRNA"/>
</dbReference>
<dbReference type="EMBL" id="AJ388530">
    <property type="protein sequence ID" value="CAB46832.1"/>
    <property type="molecule type" value="mRNA"/>
</dbReference>
<dbReference type="RefSeq" id="NP_001003149.1">
    <property type="nucleotide sequence ID" value="NM_001003149.1"/>
</dbReference>
<dbReference type="SMR" id="Q9XST5"/>
<dbReference type="STRING" id="9615.ENSCAFP00000013399"/>
<dbReference type="PaxDb" id="9612-ENSCAFP00000013399"/>
<dbReference type="Ensembl" id="ENSCAFT00000014487.5">
    <property type="protein sequence ID" value="ENSCAFP00000013399.5"/>
    <property type="gene ID" value="ENSCAFG00000023759.4"/>
</dbReference>
<dbReference type="Ensembl" id="ENSCAFT00030007812.1">
    <property type="protein sequence ID" value="ENSCAFP00030006852.1"/>
    <property type="gene ID" value="ENSCAFG00030004211.1"/>
</dbReference>
<dbReference type="Ensembl" id="ENSCAFT00040025591.1">
    <property type="protein sequence ID" value="ENSCAFP00040022249.1"/>
    <property type="gene ID" value="ENSCAFG00040013818.1"/>
</dbReference>
<dbReference type="Ensembl" id="ENSCAFT00845006916.1">
    <property type="protein sequence ID" value="ENSCAFP00845005508.1"/>
    <property type="gene ID" value="ENSCAFG00845003852.1"/>
</dbReference>
<dbReference type="GeneID" id="403768"/>
<dbReference type="KEGG" id="cfa:403768"/>
<dbReference type="CTD" id="4502"/>
<dbReference type="VEuPathDB" id="HostDB:ENSCAFG00845003852"/>
<dbReference type="eggNOG" id="KOG4738">
    <property type="taxonomic scope" value="Eukaryota"/>
</dbReference>
<dbReference type="GeneTree" id="ENSGT00950000182967"/>
<dbReference type="HOGENOM" id="CLU_171204_2_0_1"/>
<dbReference type="InParanoid" id="Q9XST5"/>
<dbReference type="OMA" id="KECKCSS"/>
<dbReference type="TreeFam" id="TF336054"/>
<dbReference type="Reactome" id="R-CFA-5661231">
    <property type="pathway name" value="Metallothioneins bind metals"/>
</dbReference>
<dbReference type="Proteomes" id="UP000002254">
    <property type="component" value="Chromosome 2"/>
</dbReference>
<dbReference type="Proteomes" id="UP000694429">
    <property type="component" value="Chromosome 2"/>
</dbReference>
<dbReference type="Proteomes" id="UP000694542">
    <property type="component" value="Chromosome 2"/>
</dbReference>
<dbReference type="Proteomes" id="UP000805418">
    <property type="component" value="Chromosome 2"/>
</dbReference>
<dbReference type="GO" id="GO:0005737">
    <property type="term" value="C:cytoplasm"/>
    <property type="evidence" value="ECO:0000250"/>
    <property type="project" value="UniProtKB"/>
</dbReference>
<dbReference type="GO" id="GO:0005634">
    <property type="term" value="C:nucleus"/>
    <property type="evidence" value="ECO:0000250"/>
    <property type="project" value="UniProtKB"/>
</dbReference>
<dbReference type="GO" id="GO:0008270">
    <property type="term" value="F:zinc ion binding"/>
    <property type="evidence" value="ECO:0000250"/>
    <property type="project" value="UniProtKB"/>
</dbReference>
<dbReference type="GO" id="GO:0071294">
    <property type="term" value="P:cellular response to zinc ion"/>
    <property type="evidence" value="ECO:0000250"/>
    <property type="project" value="UniProtKB"/>
</dbReference>
<dbReference type="GO" id="GO:0045926">
    <property type="term" value="P:negative regulation of growth"/>
    <property type="evidence" value="ECO:0000250"/>
    <property type="project" value="UniProtKB"/>
</dbReference>
<dbReference type="FunFam" id="4.10.10.10:FF:000001">
    <property type="entry name" value="Metallothionein"/>
    <property type="match status" value="1"/>
</dbReference>
<dbReference type="Gene3D" id="4.10.10.10">
    <property type="entry name" value="Metallothionein Isoform II"/>
    <property type="match status" value="1"/>
</dbReference>
<dbReference type="InterPro" id="IPR017854">
    <property type="entry name" value="Metalthion_dom_sf"/>
</dbReference>
<dbReference type="InterPro" id="IPR023587">
    <property type="entry name" value="Metalthion_dom_sf_vert"/>
</dbReference>
<dbReference type="InterPro" id="IPR000006">
    <property type="entry name" value="Metalthion_vert"/>
</dbReference>
<dbReference type="InterPro" id="IPR018064">
    <property type="entry name" value="Metalthion_vert_metal_BS"/>
</dbReference>
<dbReference type="PANTHER" id="PTHR23299">
    <property type="entry name" value="METALLOTHIONEIN"/>
    <property type="match status" value="1"/>
</dbReference>
<dbReference type="PANTHER" id="PTHR23299:SF22">
    <property type="entry name" value="METALLOTHIONEIN-1G"/>
    <property type="match status" value="1"/>
</dbReference>
<dbReference type="Pfam" id="PF00131">
    <property type="entry name" value="Metallothio"/>
    <property type="match status" value="1"/>
</dbReference>
<dbReference type="PRINTS" id="PR00860">
    <property type="entry name" value="MTVERTEBRATE"/>
</dbReference>
<dbReference type="SUPFAM" id="SSF57868">
    <property type="entry name" value="Metallothionein"/>
    <property type="match status" value="1"/>
</dbReference>
<dbReference type="PROSITE" id="PS00203">
    <property type="entry name" value="METALLOTHIONEIN_VRT"/>
    <property type="match status" value="1"/>
</dbReference>
<gene>
    <name type="primary">MT2A</name>
    <name type="synonym">MT2</name>
    <name type="ORF">B28</name>
</gene>
<reference key="1">
    <citation type="journal article" date="1985" name="Arch. Biochem. Biophys.">
        <title>Canine hepatic lysosomal copper protein: identification as metallothionein.</title>
        <authorList>
            <person name="Lerch K."/>
            <person name="Johnson G.F."/>
            <person name="Grushoff P.S."/>
            <person name="Sternlieb I."/>
        </authorList>
    </citation>
    <scope>PROTEIN SEQUENCE</scope>
    <source>
        <tissue>Liver</tissue>
    </source>
</reference>
<reference key="2">
    <citation type="submission" date="1999-05" db="EMBL/GenBank/DDBJ databases">
        <title>Molecular cloning and expression of canine metallothionein-II.</title>
        <authorList>
            <person name="Kobayashi K."/>
            <person name="Morita T."/>
            <person name="Shimada A."/>
        </authorList>
    </citation>
    <scope>NUCLEOTIDE SEQUENCE [MRNA]</scope>
    <source>
        <strain>Beagle</strain>
        <tissue>Kidney</tissue>
    </source>
</reference>
<reference key="3">
    <citation type="journal article" date="2000" name="Anal. Biochem.">
        <title>A method for the large-scale cloning of nuclear proteins and nuclear targeting sequences on a functional basis.</title>
        <authorList>
            <person name="Pichon B."/>
            <person name="Mercan D."/>
            <person name="Pouillon V."/>
            <person name="Christophe-Hobertus C."/>
            <person name="Christophe D."/>
        </authorList>
    </citation>
    <scope>NUCLEOTIDE SEQUENCE [LARGE SCALE MRNA]</scope>
    <source>
        <tissue>Thyroid</tissue>
    </source>
</reference>
<organism>
    <name type="scientific">Canis lupus familiaris</name>
    <name type="common">Dog</name>
    <name type="synonym">Canis familiaris</name>
    <dbReference type="NCBI Taxonomy" id="9615"/>
    <lineage>
        <taxon>Eukaryota</taxon>
        <taxon>Metazoa</taxon>
        <taxon>Chordata</taxon>
        <taxon>Craniata</taxon>
        <taxon>Vertebrata</taxon>
        <taxon>Euteleostomi</taxon>
        <taxon>Mammalia</taxon>
        <taxon>Eutheria</taxon>
        <taxon>Laurasiatheria</taxon>
        <taxon>Carnivora</taxon>
        <taxon>Caniformia</taxon>
        <taxon>Canidae</taxon>
        <taxon>Canis</taxon>
    </lineage>
</organism>
<evidence type="ECO:0000250" key="1">
    <source>
        <dbReference type="UniProtKB" id="P02795"/>
    </source>
</evidence>
<evidence type="ECO:0000250" key="2">
    <source>
        <dbReference type="UniProtKB" id="P68301"/>
    </source>
</evidence>
<evidence type="ECO:0000305" key="3"/>
<name>MT2_CANLF</name>
<feature type="chain" id="PRO_0000197199" description="Metallothionein-2">
    <location>
        <begin position="1"/>
        <end position="61"/>
    </location>
</feature>
<feature type="region of interest" description="Beta">
    <location>
        <begin position="1"/>
        <end position="29"/>
    </location>
</feature>
<feature type="region of interest" description="Alpha">
    <location>
        <begin position="30"/>
        <end position="61"/>
    </location>
</feature>
<feature type="binding site" evidence="1">
    <location>
        <position position="5"/>
    </location>
    <ligand>
        <name>a divalent metal cation</name>
        <dbReference type="ChEBI" id="CHEBI:60240"/>
        <label>1</label>
        <note>in cluster B</note>
    </ligand>
</feature>
<feature type="binding site" evidence="1">
    <location>
        <position position="7"/>
    </location>
    <ligand>
        <name>a divalent metal cation</name>
        <dbReference type="ChEBI" id="CHEBI:60240"/>
        <label>1</label>
        <note>in cluster B</note>
    </ligand>
</feature>
<feature type="binding site" evidence="1">
    <location>
        <position position="7"/>
    </location>
    <ligand>
        <name>a divalent metal cation</name>
        <dbReference type="ChEBI" id="CHEBI:60240"/>
        <label>2</label>
        <note>in cluster B</note>
    </ligand>
</feature>
<feature type="binding site" evidence="1">
    <location>
        <position position="13"/>
    </location>
    <ligand>
        <name>a divalent metal cation</name>
        <dbReference type="ChEBI" id="CHEBI:60240"/>
        <label>2</label>
        <note>in cluster B</note>
    </ligand>
</feature>
<feature type="binding site" evidence="1">
    <location>
        <position position="15"/>
    </location>
    <ligand>
        <name>a divalent metal cation</name>
        <dbReference type="ChEBI" id="CHEBI:60240"/>
        <label>2</label>
        <note>in cluster B</note>
    </ligand>
</feature>
<feature type="binding site" evidence="1">
    <location>
        <position position="15"/>
    </location>
    <ligand>
        <name>a divalent metal cation</name>
        <dbReference type="ChEBI" id="CHEBI:60240"/>
        <label>3</label>
        <note>in cluster B</note>
    </ligand>
</feature>
<feature type="binding site" evidence="1">
    <location>
        <position position="19"/>
    </location>
    <ligand>
        <name>a divalent metal cation</name>
        <dbReference type="ChEBI" id="CHEBI:60240"/>
        <label>3</label>
        <note>in cluster B</note>
    </ligand>
</feature>
<feature type="binding site" evidence="1">
    <location>
        <position position="21"/>
    </location>
    <ligand>
        <name>a divalent metal cation</name>
        <dbReference type="ChEBI" id="CHEBI:60240"/>
        <label>1</label>
        <note>in cluster B</note>
    </ligand>
</feature>
<feature type="binding site" evidence="1">
    <location>
        <position position="24"/>
    </location>
    <ligand>
        <name>a divalent metal cation</name>
        <dbReference type="ChEBI" id="CHEBI:60240"/>
        <label>1</label>
        <note>in cluster B</note>
    </ligand>
</feature>
<feature type="binding site" evidence="1">
    <location>
        <position position="24"/>
    </location>
    <ligand>
        <name>a divalent metal cation</name>
        <dbReference type="ChEBI" id="CHEBI:60240"/>
        <label>3</label>
        <note>in cluster B</note>
    </ligand>
</feature>
<feature type="binding site" evidence="1">
    <location>
        <position position="26"/>
    </location>
    <ligand>
        <name>a divalent metal cation</name>
        <dbReference type="ChEBI" id="CHEBI:60240"/>
        <label>2</label>
        <note>in cluster B</note>
    </ligand>
</feature>
<feature type="binding site" evidence="1">
    <location>
        <position position="29"/>
    </location>
    <ligand>
        <name>a divalent metal cation</name>
        <dbReference type="ChEBI" id="CHEBI:60240"/>
        <label>3</label>
        <note>in cluster B</note>
    </ligand>
</feature>
<feature type="binding site" evidence="1">
    <location>
        <position position="33"/>
    </location>
    <ligand>
        <name>a divalent metal cation</name>
        <dbReference type="ChEBI" id="CHEBI:60240"/>
        <label>4</label>
        <note>in cluster A</note>
    </ligand>
</feature>
<feature type="binding site" evidence="1">
    <location>
        <position position="34"/>
    </location>
    <ligand>
        <name>a divalent metal cation</name>
        <dbReference type="ChEBI" id="CHEBI:60240"/>
        <label>4</label>
        <note>in cluster A</note>
    </ligand>
</feature>
<feature type="binding site" evidence="1">
    <location>
        <position position="34"/>
    </location>
    <ligand>
        <name>a divalent metal cation</name>
        <dbReference type="ChEBI" id="CHEBI:60240"/>
        <label>5</label>
        <note>in cluster A</note>
    </ligand>
</feature>
<feature type="binding site" evidence="1">
    <location>
        <position position="36"/>
    </location>
    <ligand>
        <name>a divalent metal cation</name>
        <dbReference type="ChEBI" id="CHEBI:60240"/>
        <label>5</label>
        <note>in cluster A</note>
    </ligand>
</feature>
<feature type="binding site" evidence="1">
    <location>
        <position position="37"/>
    </location>
    <ligand>
        <name>a divalent metal cation</name>
        <dbReference type="ChEBI" id="CHEBI:60240"/>
        <label>5</label>
        <note>in cluster A</note>
    </ligand>
</feature>
<feature type="binding site" evidence="1">
    <location>
        <position position="37"/>
    </location>
    <ligand>
        <name>a divalent metal cation</name>
        <dbReference type="ChEBI" id="CHEBI:60240"/>
        <label>6</label>
        <note>in cluster A</note>
    </ligand>
</feature>
<feature type="binding site" evidence="1">
    <location>
        <position position="41"/>
    </location>
    <ligand>
        <name>a divalent metal cation</name>
        <dbReference type="ChEBI" id="CHEBI:60240"/>
        <label>6</label>
        <note>in cluster A</note>
    </ligand>
</feature>
<feature type="binding site" evidence="1">
    <location>
        <position position="44"/>
    </location>
    <ligand>
        <name>a divalent metal cation</name>
        <dbReference type="ChEBI" id="CHEBI:60240"/>
        <label>4</label>
        <note>in cluster A</note>
    </ligand>
</feature>
<feature type="binding site" evidence="1">
    <location>
        <position position="44"/>
    </location>
    <ligand>
        <name>a divalent metal cation</name>
        <dbReference type="ChEBI" id="CHEBI:60240"/>
        <label>6</label>
        <note>in cluster A</note>
    </ligand>
</feature>
<feature type="binding site" evidence="1">
    <location>
        <position position="48"/>
    </location>
    <ligand>
        <name>a divalent metal cation</name>
        <dbReference type="ChEBI" id="CHEBI:60240"/>
        <label>4</label>
        <note>in cluster A</note>
    </ligand>
</feature>
<feature type="binding site" evidence="1">
    <location>
        <position position="50"/>
    </location>
    <ligand>
        <name>a divalent metal cation</name>
        <dbReference type="ChEBI" id="CHEBI:60240"/>
        <label>5</label>
        <note>in cluster A</note>
    </ligand>
</feature>
<feature type="binding site" evidence="1">
    <location>
        <position position="50"/>
    </location>
    <ligand>
        <name>a divalent metal cation</name>
        <dbReference type="ChEBI" id="CHEBI:60240"/>
        <label>7</label>
        <note>in cluster A</note>
    </ligand>
</feature>
<feature type="binding site" evidence="1">
    <location>
        <position position="57"/>
    </location>
    <ligand>
        <name>a divalent metal cation</name>
        <dbReference type="ChEBI" id="CHEBI:60240"/>
        <label>7</label>
        <note>in cluster A</note>
    </ligand>
</feature>
<feature type="binding site" evidence="1">
    <location>
        <position position="59"/>
    </location>
    <ligand>
        <name>a divalent metal cation</name>
        <dbReference type="ChEBI" id="CHEBI:60240"/>
        <label>7</label>
        <note>in cluster A</note>
    </ligand>
</feature>
<feature type="binding site" evidence="1">
    <location>
        <position position="60"/>
    </location>
    <ligand>
        <name>a divalent metal cation</name>
        <dbReference type="ChEBI" id="CHEBI:60240"/>
        <label>6</label>
        <note>in cluster A</note>
    </ligand>
</feature>
<feature type="binding site" evidence="1">
    <location>
        <position position="60"/>
    </location>
    <ligand>
        <name>a divalent metal cation</name>
        <dbReference type="ChEBI" id="CHEBI:60240"/>
        <label>7</label>
        <note>in cluster A</note>
    </ligand>
</feature>
<feature type="modified residue" description="N-acetylmethionine" evidence="2">
    <location>
        <position position="1"/>
    </location>
</feature>
<feature type="modified residue" description="Phosphoserine" evidence="1">
    <location>
        <position position="58"/>
    </location>
</feature>
<comment type="function">
    <text>Metallothioneins have a high content of cysteine residues that bind various heavy metals; these proteins are transcriptionally regulated by both heavy metals and glucocorticoids.</text>
</comment>
<comment type="subunit">
    <text evidence="1">Interacts with EOLA1.</text>
</comment>
<comment type="domain">
    <text>Class I metallothioneins contain 2 metal-binding domains: four divalent ions are chelated within cluster A of the alpha domain and are coordinated via cysteinyl thiolate bridges to 11 cysteine ligands. Cluster B, the corresponding region within the beta domain, can ligate three divalent ions to 9 cysteines.</text>
</comment>
<comment type="similarity">
    <text evidence="3">Belongs to the metallothionein superfamily. Type 1 family.</text>
</comment>
<accession>Q9XST5</accession>
<sequence length="61" mass="6012">MDPNCSCAAGGSCTCAGSCKCKECRCTSCKKSCCSCCPVGCAKCAQGCICKGASDKCSCCA</sequence>
<keyword id="KW-0007">Acetylation</keyword>
<keyword id="KW-0903">Direct protein sequencing</keyword>
<keyword id="KW-0479">Metal-binding</keyword>
<keyword id="KW-0480">Metal-thiolate cluster</keyword>
<keyword id="KW-0597">Phosphoprotein</keyword>
<keyword id="KW-1185">Reference proteome</keyword>